<protein>
    <recommendedName>
        <fullName evidence="5">Probable 6-phosphogluconolactonase 1</fullName>
        <shortName evidence="5">6PGL1</shortName>
        <ecNumber evidence="1">3.1.1.31</ecNumber>
    </recommendedName>
</protein>
<sequence length="268" mass="29887">MALTWTHKDRGEIRVHENLEELSIDLVDYIAEISEASIKEHGAFCIVLSGGSLISFMGKLIEPPYDKIVDWAKWYVFWADERVVAKNHDDSNYKLAKDNLLSKVNVFPRHICSINDTVSAEEAATEYEFAIRQMVRSRTVAASDNSDSPRFDLILLGMGSDGHVASLFPNHPALEVKDDWVTFLTDSHKPPPERITFTLPVINSAANVVVVATGESKANAIHLAIDDLPLPDSSLSLPARLVHPSNGNLIWFMDKQAGSKLDRFKFSE</sequence>
<organism>
    <name type="scientific">Arabidopsis thaliana</name>
    <name type="common">Mouse-ear cress</name>
    <dbReference type="NCBI Taxonomy" id="3702"/>
    <lineage>
        <taxon>Eukaryota</taxon>
        <taxon>Viridiplantae</taxon>
        <taxon>Streptophyta</taxon>
        <taxon>Embryophyta</taxon>
        <taxon>Tracheophyta</taxon>
        <taxon>Spermatophyta</taxon>
        <taxon>Magnoliopsida</taxon>
        <taxon>eudicotyledons</taxon>
        <taxon>Gunneridae</taxon>
        <taxon>Pentapetalae</taxon>
        <taxon>rosids</taxon>
        <taxon>malvids</taxon>
        <taxon>Brassicales</taxon>
        <taxon>Brassicaceae</taxon>
        <taxon>Camelineae</taxon>
        <taxon>Arabidopsis</taxon>
    </lineage>
</organism>
<reference key="1">
    <citation type="journal article" date="2000" name="Nature">
        <title>Sequence and analysis of chromosome 1 of the plant Arabidopsis thaliana.</title>
        <authorList>
            <person name="Theologis A."/>
            <person name="Ecker J.R."/>
            <person name="Palm C.J."/>
            <person name="Federspiel N.A."/>
            <person name="Kaul S."/>
            <person name="White O."/>
            <person name="Alonso J."/>
            <person name="Altafi H."/>
            <person name="Araujo R."/>
            <person name="Bowman C.L."/>
            <person name="Brooks S.Y."/>
            <person name="Buehler E."/>
            <person name="Chan A."/>
            <person name="Chao Q."/>
            <person name="Chen H."/>
            <person name="Cheuk R.F."/>
            <person name="Chin C.W."/>
            <person name="Chung M.K."/>
            <person name="Conn L."/>
            <person name="Conway A.B."/>
            <person name="Conway A.R."/>
            <person name="Creasy T.H."/>
            <person name="Dewar K."/>
            <person name="Dunn P."/>
            <person name="Etgu P."/>
            <person name="Feldblyum T.V."/>
            <person name="Feng J.-D."/>
            <person name="Fong B."/>
            <person name="Fujii C.Y."/>
            <person name="Gill J.E."/>
            <person name="Goldsmith A.D."/>
            <person name="Haas B."/>
            <person name="Hansen N.F."/>
            <person name="Hughes B."/>
            <person name="Huizar L."/>
            <person name="Hunter J.L."/>
            <person name="Jenkins J."/>
            <person name="Johnson-Hopson C."/>
            <person name="Khan S."/>
            <person name="Khaykin E."/>
            <person name="Kim C.J."/>
            <person name="Koo H.L."/>
            <person name="Kremenetskaia I."/>
            <person name="Kurtz D.B."/>
            <person name="Kwan A."/>
            <person name="Lam B."/>
            <person name="Langin-Hooper S."/>
            <person name="Lee A."/>
            <person name="Lee J.M."/>
            <person name="Lenz C.A."/>
            <person name="Li J.H."/>
            <person name="Li Y.-P."/>
            <person name="Lin X."/>
            <person name="Liu S.X."/>
            <person name="Liu Z.A."/>
            <person name="Luros J.S."/>
            <person name="Maiti R."/>
            <person name="Marziali A."/>
            <person name="Militscher J."/>
            <person name="Miranda M."/>
            <person name="Nguyen M."/>
            <person name="Nierman W.C."/>
            <person name="Osborne B.I."/>
            <person name="Pai G."/>
            <person name="Peterson J."/>
            <person name="Pham P.K."/>
            <person name="Rizzo M."/>
            <person name="Rooney T."/>
            <person name="Rowley D."/>
            <person name="Sakano H."/>
            <person name="Salzberg S.L."/>
            <person name="Schwartz J.R."/>
            <person name="Shinn P."/>
            <person name="Southwick A.M."/>
            <person name="Sun H."/>
            <person name="Tallon L.J."/>
            <person name="Tambunga G."/>
            <person name="Toriumi M.J."/>
            <person name="Town C.D."/>
            <person name="Utterback T."/>
            <person name="Van Aken S."/>
            <person name="Vaysberg M."/>
            <person name="Vysotskaia V.S."/>
            <person name="Walker M."/>
            <person name="Wu D."/>
            <person name="Yu G."/>
            <person name="Fraser C.M."/>
            <person name="Venter J.C."/>
            <person name="Davis R.W."/>
        </authorList>
    </citation>
    <scope>NUCLEOTIDE SEQUENCE [LARGE SCALE GENOMIC DNA]</scope>
    <source>
        <strain>cv. Columbia</strain>
    </source>
</reference>
<reference key="2">
    <citation type="journal article" date="2017" name="Plant J.">
        <title>Araport11: a complete reannotation of the Arabidopsis thaliana reference genome.</title>
        <authorList>
            <person name="Cheng C.Y."/>
            <person name="Krishnakumar V."/>
            <person name="Chan A.P."/>
            <person name="Thibaud-Nissen F."/>
            <person name="Schobel S."/>
            <person name="Town C.D."/>
        </authorList>
    </citation>
    <scope>GENOME REANNOTATION</scope>
    <source>
        <strain>cv. Columbia</strain>
    </source>
</reference>
<reference key="3">
    <citation type="submission" date="2004-09" db="EMBL/GenBank/DDBJ databases">
        <title>Arabidopsis ORF clones.</title>
        <authorList>
            <person name="Shinn P."/>
            <person name="Chen H."/>
            <person name="Cheuk R.F."/>
            <person name="Kim C.J."/>
            <person name="Ecker J.R."/>
        </authorList>
    </citation>
    <scope>NUCLEOTIDE SEQUENCE [LARGE SCALE MRNA]</scope>
    <source>
        <strain>cv. Columbia</strain>
    </source>
</reference>
<reference key="4">
    <citation type="journal article" date="2009" name="Plant Cell Physiol.">
        <title>Characterization of Arabidopsis 6-phosphogluconolactonase T-DNA insertion mutants reveals an essential role for the oxidative section of the plastidic pentose phosphate pathway in plant growth and development.</title>
        <authorList>
            <person name="Xiong Y."/>
            <person name="DeFraia C."/>
            <person name="Williams D."/>
            <person name="Zhang X."/>
            <person name="Mou Z."/>
        </authorList>
    </citation>
    <scope>GENE FAMILY</scope>
    <scope>NOMENCLATURE</scope>
    <scope>DISRUPTION PHENOTYPE</scope>
</reference>
<reference key="5">
    <citation type="journal article" date="2014" name="Mol. Plant">
        <title>Dual-targeting of Arabidopsis 6-phosphogluconolactonase 3 (PGL3) to chloroplasts and peroxisomes involves interaction with Trx m2 in the cytosol.</title>
        <authorList>
            <person name="Hoelscher C."/>
            <person name="Meyer T."/>
            <person name="von Schaewen A."/>
        </authorList>
    </citation>
    <scope>SUBCELLULAR LOCATION</scope>
</reference>
<feature type="chain" id="PRO_0000288668" description="Probable 6-phosphogluconolactonase 1">
    <location>
        <begin position="1"/>
        <end position="268"/>
    </location>
</feature>
<dbReference type="EC" id="3.1.1.31" evidence="1"/>
<dbReference type="EMBL" id="AC027656">
    <property type="protein sequence ID" value="AAF81297.1"/>
    <property type="molecule type" value="Genomic_DNA"/>
</dbReference>
<dbReference type="EMBL" id="CP002684">
    <property type="protein sequence ID" value="AEE29059.1"/>
    <property type="molecule type" value="Genomic_DNA"/>
</dbReference>
<dbReference type="EMBL" id="CP002684">
    <property type="protein sequence ID" value="ANM59247.1"/>
    <property type="molecule type" value="Genomic_DNA"/>
</dbReference>
<dbReference type="EMBL" id="CP002684">
    <property type="protein sequence ID" value="ANM59248.1"/>
    <property type="molecule type" value="Genomic_DNA"/>
</dbReference>
<dbReference type="EMBL" id="BT014903">
    <property type="protein sequence ID" value="AAT46032.1"/>
    <property type="molecule type" value="mRNA"/>
</dbReference>
<dbReference type="EMBL" id="BT015753">
    <property type="protein sequence ID" value="AAU84690.1"/>
    <property type="molecule type" value="mRNA"/>
</dbReference>
<dbReference type="PIR" id="D86270">
    <property type="entry name" value="D86270"/>
</dbReference>
<dbReference type="RefSeq" id="NP_001318995.1">
    <property type="nucleotide sequence ID" value="NM_001332082.1"/>
</dbReference>
<dbReference type="RefSeq" id="NP_001321621.1">
    <property type="nucleotide sequence ID" value="NM_001332083.1"/>
</dbReference>
<dbReference type="RefSeq" id="NP_172826.1">
    <property type="nucleotide sequence ID" value="NM_101239.4"/>
</dbReference>
<dbReference type="SMR" id="Q9LMX8"/>
<dbReference type="FunCoup" id="Q9LMX8">
    <property type="interactions" value="3400"/>
</dbReference>
<dbReference type="STRING" id="3702.Q9LMX8"/>
<dbReference type="PaxDb" id="3702-AT1G13700.1"/>
<dbReference type="ProteomicsDB" id="245137"/>
<dbReference type="EnsemblPlants" id="AT1G13700.1">
    <property type="protein sequence ID" value="AT1G13700.1"/>
    <property type="gene ID" value="AT1G13700"/>
</dbReference>
<dbReference type="EnsemblPlants" id="AT1G13700.2">
    <property type="protein sequence ID" value="AT1G13700.2"/>
    <property type="gene ID" value="AT1G13700"/>
</dbReference>
<dbReference type="EnsemblPlants" id="AT1G13700.3">
    <property type="protein sequence ID" value="AT1G13700.3"/>
    <property type="gene ID" value="AT1G13700"/>
</dbReference>
<dbReference type="GeneID" id="837931"/>
<dbReference type="Gramene" id="AT1G13700.1">
    <property type="protein sequence ID" value="AT1G13700.1"/>
    <property type="gene ID" value="AT1G13700"/>
</dbReference>
<dbReference type="Gramene" id="AT1G13700.2">
    <property type="protein sequence ID" value="AT1G13700.2"/>
    <property type="gene ID" value="AT1G13700"/>
</dbReference>
<dbReference type="Gramene" id="AT1G13700.3">
    <property type="protein sequence ID" value="AT1G13700.3"/>
    <property type="gene ID" value="AT1G13700"/>
</dbReference>
<dbReference type="KEGG" id="ath:AT1G13700"/>
<dbReference type="Araport" id="AT1G13700"/>
<dbReference type="TAIR" id="AT1G13700">
    <property type="gene designation" value="PGL1"/>
</dbReference>
<dbReference type="eggNOG" id="KOG3147">
    <property type="taxonomic scope" value="Eukaryota"/>
</dbReference>
<dbReference type="HOGENOM" id="CLU_053947_0_0_1"/>
<dbReference type="InParanoid" id="Q9LMX8"/>
<dbReference type="OMA" id="YDKIVDW"/>
<dbReference type="PhylomeDB" id="Q9LMX8"/>
<dbReference type="BioCyc" id="ARA:AT1G13700-MONOMER"/>
<dbReference type="BRENDA" id="3.1.1.31">
    <property type="organism ID" value="399"/>
</dbReference>
<dbReference type="UniPathway" id="UPA00115">
    <property type="reaction ID" value="UER00409"/>
</dbReference>
<dbReference type="PRO" id="PR:Q9LMX8"/>
<dbReference type="Proteomes" id="UP000006548">
    <property type="component" value="Chromosome 1"/>
</dbReference>
<dbReference type="ExpressionAtlas" id="Q9LMX8">
    <property type="expression patterns" value="baseline and differential"/>
</dbReference>
<dbReference type="GO" id="GO:0005829">
    <property type="term" value="C:cytosol"/>
    <property type="evidence" value="ECO:0000314"/>
    <property type="project" value="TAIR"/>
</dbReference>
<dbReference type="GO" id="GO:0017057">
    <property type="term" value="F:6-phosphogluconolactonase activity"/>
    <property type="evidence" value="ECO:0007669"/>
    <property type="project" value="UniProtKB-EC"/>
</dbReference>
<dbReference type="GO" id="GO:0005975">
    <property type="term" value="P:carbohydrate metabolic process"/>
    <property type="evidence" value="ECO:0007669"/>
    <property type="project" value="InterPro"/>
</dbReference>
<dbReference type="GO" id="GO:0006098">
    <property type="term" value="P:pentose-phosphate shunt"/>
    <property type="evidence" value="ECO:0007669"/>
    <property type="project" value="UniProtKB-UniPathway"/>
</dbReference>
<dbReference type="CDD" id="cd01400">
    <property type="entry name" value="6PGL"/>
    <property type="match status" value="1"/>
</dbReference>
<dbReference type="FunFam" id="3.40.50.1360:FF:000009">
    <property type="entry name" value="Probable 6-phosphogluconolactonase"/>
    <property type="match status" value="1"/>
</dbReference>
<dbReference type="Gene3D" id="3.40.50.1360">
    <property type="match status" value="1"/>
</dbReference>
<dbReference type="InterPro" id="IPR005900">
    <property type="entry name" value="6-phosphogluconolactonase_DevB"/>
</dbReference>
<dbReference type="InterPro" id="IPR006148">
    <property type="entry name" value="Glc/Gal-6P_isomerase"/>
</dbReference>
<dbReference type="InterPro" id="IPR037171">
    <property type="entry name" value="NagB/RpiA_transferase-like"/>
</dbReference>
<dbReference type="InterPro" id="IPR039104">
    <property type="entry name" value="PGLS"/>
</dbReference>
<dbReference type="NCBIfam" id="TIGR01198">
    <property type="entry name" value="pgl"/>
    <property type="match status" value="1"/>
</dbReference>
<dbReference type="PANTHER" id="PTHR11054">
    <property type="entry name" value="6-PHOSPHOGLUCONOLACTONASE"/>
    <property type="match status" value="1"/>
</dbReference>
<dbReference type="PANTHER" id="PTHR11054:SF17">
    <property type="entry name" value="6-PHOSPHOGLUCONOLACTONASE 1-RELATED"/>
    <property type="match status" value="1"/>
</dbReference>
<dbReference type="Pfam" id="PF01182">
    <property type="entry name" value="Glucosamine_iso"/>
    <property type="match status" value="1"/>
</dbReference>
<dbReference type="SUPFAM" id="SSF100950">
    <property type="entry name" value="NagB/RpiA/CoA transferase-like"/>
    <property type="match status" value="1"/>
</dbReference>
<accession>Q9LMX8</accession>
<proteinExistence type="evidence at transcript level"/>
<gene>
    <name evidence="4" type="primary">PGL1</name>
    <name evidence="6" type="ordered locus">At1g13700</name>
    <name evidence="7" type="ORF">F21F23.14</name>
</gene>
<keyword id="KW-0963">Cytoplasm</keyword>
<keyword id="KW-0378">Hydrolase</keyword>
<keyword id="KW-1185">Reference proteome</keyword>
<name>6PGL1_ARATH</name>
<evidence type="ECO:0000250" key="1">
    <source>
        <dbReference type="UniProtKB" id="Q84WW2"/>
    </source>
</evidence>
<evidence type="ECO:0000269" key="2">
    <source>
    </source>
</evidence>
<evidence type="ECO:0000269" key="3">
    <source>
    </source>
</evidence>
<evidence type="ECO:0000303" key="4">
    <source>
    </source>
</evidence>
<evidence type="ECO:0000305" key="5"/>
<evidence type="ECO:0000312" key="6">
    <source>
        <dbReference type="Araport" id="AT1G13700"/>
    </source>
</evidence>
<evidence type="ECO:0000312" key="7">
    <source>
        <dbReference type="EMBL" id="AAF81297.1"/>
    </source>
</evidence>
<comment type="function">
    <text evidence="1">Catalyzes the hydrolysis of 6-phosphogluconolactone to 6-phosphogluconate.</text>
</comment>
<comment type="catalytic activity">
    <reaction evidence="1">
        <text>6-phospho-D-glucono-1,5-lactone + H2O = 6-phospho-D-gluconate + H(+)</text>
        <dbReference type="Rhea" id="RHEA:12556"/>
        <dbReference type="ChEBI" id="CHEBI:15377"/>
        <dbReference type="ChEBI" id="CHEBI:15378"/>
        <dbReference type="ChEBI" id="CHEBI:57955"/>
        <dbReference type="ChEBI" id="CHEBI:58759"/>
        <dbReference type="EC" id="3.1.1.31"/>
    </reaction>
</comment>
<comment type="pathway">
    <text evidence="5">Carbohydrate degradation; pentose phosphate pathway; D-ribulose 5-phosphate from D-glucose 6-phosphate (oxidative stage): step 2/3.</text>
</comment>
<comment type="subcellular location">
    <subcellularLocation>
        <location evidence="3">Cytoplasm</location>
        <location evidence="3">Cytosol</location>
    </subcellularLocation>
</comment>
<comment type="disruption phenotype">
    <text evidence="2">No visible phenotype under normal growth conditions.</text>
</comment>
<comment type="similarity">
    <text evidence="5">Belongs to the glucosamine/galactosamine-6-phosphate isomerase family. 6-phosphogluconolactonase subfamily.</text>
</comment>